<comment type="function">
    <text evidence="1">Functions in the N-end rule pathway of protein degradation where it conjugates Leu from its aminoacyl-tRNA to the N-termini of proteins containing an N-terminal aspartate or glutamate.</text>
</comment>
<comment type="catalytic activity">
    <reaction evidence="1">
        <text>N-terminal L-glutamyl-[protein] + L-leucyl-tRNA(Leu) = N-terminal L-leucyl-L-glutamyl-[protein] + tRNA(Leu) + H(+)</text>
        <dbReference type="Rhea" id="RHEA:50412"/>
        <dbReference type="Rhea" id="RHEA-COMP:9613"/>
        <dbReference type="Rhea" id="RHEA-COMP:9622"/>
        <dbReference type="Rhea" id="RHEA-COMP:12664"/>
        <dbReference type="Rhea" id="RHEA-COMP:12668"/>
        <dbReference type="ChEBI" id="CHEBI:15378"/>
        <dbReference type="ChEBI" id="CHEBI:64721"/>
        <dbReference type="ChEBI" id="CHEBI:78442"/>
        <dbReference type="ChEBI" id="CHEBI:78494"/>
        <dbReference type="ChEBI" id="CHEBI:133041"/>
        <dbReference type="EC" id="2.3.2.29"/>
    </reaction>
</comment>
<comment type="catalytic activity">
    <reaction evidence="1">
        <text>N-terminal L-aspartyl-[protein] + L-leucyl-tRNA(Leu) = N-terminal L-leucyl-L-aspartyl-[protein] + tRNA(Leu) + H(+)</text>
        <dbReference type="Rhea" id="RHEA:50420"/>
        <dbReference type="Rhea" id="RHEA-COMP:9613"/>
        <dbReference type="Rhea" id="RHEA-COMP:9622"/>
        <dbReference type="Rhea" id="RHEA-COMP:12669"/>
        <dbReference type="Rhea" id="RHEA-COMP:12674"/>
        <dbReference type="ChEBI" id="CHEBI:15378"/>
        <dbReference type="ChEBI" id="CHEBI:64720"/>
        <dbReference type="ChEBI" id="CHEBI:78442"/>
        <dbReference type="ChEBI" id="CHEBI:78494"/>
        <dbReference type="ChEBI" id="CHEBI:133042"/>
        <dbReference type="EC" id="2.3.2.29"/>
    </reaction>
</comment>
<comment type="subcellular location">
    <subcellularLocation>
        <location evidence="1">Cytoplasm</location>
    </subcellularLocation>
</comment>
<comment type="similarity">
    <text evidence="1">Belongs to the R-transferase family. Bpt subfamily.</text>
</comment>
<dbReference type="EC" id="2.3.2.29" evidence="1"/>
<dbReference type="EMBL" id="CP000911">
    <property type="protein sequence ID" value="ABY37861.1"/>
    <property type="molecule type" value="Genomic_DNA"/>
</dbReference>
<dbReference type="RefSeq" id="WP_006072511.1">
    <property type="nucleotide sequence ID" value="NC_010169.1"/>
</dbReference>
<dbReference type="SMR" id="B0CL81"/>
<dbReference type="KEGG" id="bmt:BSUIS_A0790"/>
<dbReference type="HOGENOM" id="CLU_077607_1_0_5"/>
<dbReference type="Proteomes" id="UP000008545">
    <property type="component" value="Chromosome I"/>
</dbReference>
<dbReference type="GO" id="GO:0005737">
    <property type="term" value="C:cytoplasm"/>
    <property type="evidence" value="ECO:0007669"/>
    <property type="project" value="UniProtKB-SubCell"/>
</dbReference>
<dbReference type="GO" id="GO:0004057">
    <property type="term" value="F:arginyl-tRNA--protein transferase activity"/>
    <property type="evidence" value="ECO:0007669"/>
    <property type="project" value="InterPro"/>
</dbReference>
<dbReference type="GO" id="GO:0008914">
    <property type="term" value="F:leucyl-tRNA--protein transferase activity"/>
    <property type="evidence" value="ECO:0007669"/>
    <property type="project" value="UniProtKB-UniRule"/>
</dbReference>
<dbReference type="GO" id="GO:0071596">
    <property type="term" value="P:ubiquitin-dependent protein catabolic process via the N-end rule pathway"/>
    <property type="evidence" value="ECO:0007669"/>
    <property type="project" value="InterPro"/>
</dbReference>
<dbReference type="Gene3D" id="3.40.630.30">
    <property type="match status" value="1"/>
</dbReference>
<dbReference type="HAMAP" id="MF_00689">
    <property type="entry name" value="Bpt"/>
    <property type="match status" value="1"/>
</dbReference>
<dbReference type="InterPro" id="IPR016181">
    <property type="entry name" value="Acyl_CoA_acyltransferase"/>
</dbReference>
<dbReference type="InterPro" id="IPR017138">
    <property type="entry name" value="Asp_Glu_LeuTrfase"/>
</dbReference>
<dbReference type="InterPro" id="IPR030700">
    <property type="entry name" value="N-end_Aminoacyl_Trfase"/>
</dbReference>
<dbReference type="InterPro" id="IPR007472">
    <property type="entry name" value="N-end_Aminoacyl_Trfase_C"/>
</dbReference>
<dbReference type="InterPro" id="IPR007471">
    <property type="entry name" value="N-end_Aminoacyl_Trfase_N"/>
</dbReference>
<dbReference type="NCBIfam" id="NF002341">
    <property type="entry name" value="PRK01305.1-1"/>
    <property type="match status" value="1"/>
</dbReference>
<dbReference type="NCBIfam" id="NF002342">
    <property type="entry name" value="PRK01305.1-3"/>
    <property type="match status" value="1"/>
</dbReference>
<dbReference type="NCBIfam" id="NF002343">
    <property type="entry name" value="PRK01305.1-4"/>
    <property type="match status" value="1"/>
</dbReference>
<dbReference type="NCBIfam" id="NF002346">
    <property type="entry name" value="PRK01305.2-3"/>
    <property type="match status" value="1"/>
</dbReference>
<dbReference type="PANTHER" id="PTHR21367">
    <property type="entry name" value="ARGININE-TRNA-PROTEIN TRANSFERASE 1"/>
    <property type="match status" value="1"/>
</dbReference>
<dbReference type="PANTHER" id="PTHR21367:SF1">
    <property type="entry name" value="ARGINYL-TRNA--PROTEIN TRANSFERASE 1"/>
    <property type="match status" value="1"/>
</dbReference>
<dbReference type="Pfam" id="PF04377">
    <property type="entry name" value="ATE_C"/>
    <property type="match status" value="1"/>
</dbReference>
<dbReference type="Pfam" id="PF04376">
    <property type="entry name" value="ATE_N"/>
    <property type="match status" value="1"/>
</dbReference>
<dbReference type="PIRSF" id="PIRSF037208">
    <property type="entry name" value="ATE_pro_prd"/>
    <property type="match status" value="1"/>
</dbReference>
<dbReference type="SUPFAM" id="SSF55729">
    <property type="entry name" value="Acyl-CoA N-acyltransferases (Nat)"/>
    <property type="match status" value="1"/>
</dbReference>
<accession>B0CL81</accession>
<sequence>MTHQPQQSPQFFLTAPSPCPYLEGQQERKVFTHLVGDKANEINDLLTQGGFRRSQNIAYRPACEVCRACISVRILAGEFEMTRNMRRVWSQNRDLIGRVHKAQPSTEQYALFRDYLDARHRSGGMSDMTVLDYAMMIEDTHVNTQIIEYRRRGPDSFMSAKGDGELIAVALTDVMADGLSMVYSFFSPHMQERSLGTYMILDHIEWARAAGLPHVYLGYWVEGSRKMQYKIRFTPQEHLGPRGWQRFEG</sequence>
<protein>
    <recommendedName>
        <fullName evidence="1">Aspartate/glutamate leucyltransferase</fullName>
        <ecNumber evidence="1">2.3.2.29</ecNumber>
    </recommendedName>
</protein>
<proteinExistence type="inferred from homology"/>
<organism>
    <name type="scientific">Brucella suis (strain ATCC 23445 / NCTC 10510)</name>
    <dbReference type="NCBI Taxonomy" id="470137"/>
    <lineage>
        <taxon>Bacteria</taxon>
        <taxon>Pseudomonadati</taxon>
        <taxon>Pseudomonadota</taxon>
        <taxon>Alphaproteobacteria</taxon>
        <taxon>Hyphomicrobiales</taxon>
        <taxon>Brucellaceae</taxon>
        <taxon>Brucella/Ochrobactrum group</taxon>
        <taxon>Brucella</taxon>
    </lineage>
</organism>
<name>BPT_BRUSI</name>
<reference key="1">
    <citation type="submission" date="2007-12" db="EMBL/GenBank/DDBJ databases">
        <title>Brucella suis ATCC 23445 whole genome shotgun sequencing project.</title>
        <authorList>
            <person name="Setubal J.C."/>
            <person name="Bowns C."/>
            <person name="Boyle S."/>
            <person name="Crasta O.R."/>
            <person name="Czar M.J."/>
            <person name="Dharmanolla C."/>
            <person name="Gillespie J.J."/>
            <person name="Kenyon R.W."/>
            <person name="Lu J."/>
            <person name="Mane S."/>
            <person name="Mohapatra S."/>
            <person name="Nagrani S."/>
            <person name="Purkayastha A."/>
            <person name="Rajasimha H.K."/>
            <person name="Shallom J.M."/>
            <person name="Shallom S."/>
            <person name="Shukla M."/>
            <person name="Snyder E.E."/>
            <person name="Sobral B.W."/>
            <person name="Wattam A.R."/>
            <person name="Will R."/>
            <person name="Williams K."/>
            <person name="Yoo H."/>
            <person name="Bruce D."/>
            <person name="Detter C."/>
            <person name="Munk C."/>
            <person name="Brettin T.S."/>
        </authorList>
    </citation>
    <scope>NUCLEOTIDE SEQUENCE [LARGE SCALE GENOMIC DNA]</scope>
    <source>
        <strain>ATCC 23445 / NCTC 10510</strain>
    </source>
</reference>
<keyword id="KW-0012">Acyltransferase</keyword>
<keyword id="KW-0963">Cytoplasm</keyword>
<keyword id="KW-0808">Transferase</keyword>
<feature type="chain" id="PRO_1000083107" description="Aspartate/glutamate leucyltransferase">
    <location>
        <begin position="1"/>
        <end position="249"/>
    </location>
</feature>
<evidence type="ECO:0000255" key="1">
    <source>
        <dbReference type="HAMAP-Rule" id="MF_00689"/>
    </source>
</evidence>
<gene>
    <name evidence="1" type="primary">bpt</name>
    <name type="ordered locus">BSUIS_A0790</name>
</gene>